<accession>Q0JMW0</accession>
<accession>A0A0P0V2C5</accession>
<accession>Q5ZBJ5</accession>
<protein>
    <recommendedName>
        <fullName>Thiamine pyrophosphokinase 2</fullName>
        <shortName>OsTPK2</shortName>
        <ecNumber>2.7.6.2</ecNumber>
    </recommendedName>
    <alternativeName>
        <fullName>Thiamine kinase 2</fullName>
    </alternativeName>
</protein>
<gene>
    <name type="primary">TPK2</name>
    <name type="ordered locus">Os01g0356500</name>
    <name type="ordered locus">LOC_Os01g25440</name>
    <name type="ORF">B1157F09.24</name>
    <name type="ORF">P0025H06.10</name>
</gene>
<sequence>MLGRAIRSMEVMVHSSTFLLPKLHQPANSPAKKYALVVLNQNLPRFVPRLWTHAKLRICADGGANRIFDEMFQMTNDPDYESTRKRYIPEIIEGDMDSIRPEVKQFYSSQGSKISDKSHNQETTDLHKCISRIHRCTPDHEKTNLCVLVTGALGGRFDHEAANINILYLFSDMRIVLLSDDCLIRLLPKTHKHEIYIESSVEGPHCGLFPVGAPSGSTTTTGLKWNLSEAKMRFGSMISTSNIVHAEKVTVQSDADLLWTISLRNLT</sequence>
<evidence type="ECO:0000250" key="1"/>
<evidence type="ECO:0000305" key="2"/>
<proteinExistence type="evidence at transcript level"/>
<reference key="1">
    <citation type="journal article" date="2002" name="Nature">
        <title>The genome sequence and structure of rice chromosome 1.</title>
        <authorList>
            <person name="Sasaki T."/>
            <person name="Matsumoto T."/>
            <person name="Yamamoto K."/>
            <person name="Sakata K."/>
            <person name="Baba T."/>
            <person name="Katayose Y."/>
            <person name="Wu J."/>
            <person name="Niimura Y."/>
            <person name="Cheng Z."/>
            <person name="Nagamura Y."/>
            <person name="Antonio B.A."/>
            <person name="Kanamori H."/>
            <person name="Hosokawa S."/>
            <person name="Masukawa M."/>
            <person name="Arikawa K."/>
            <person name="Chiden Y."/>
            <person name="Hayashi M."/>
            <person name="Okamoto M."/>
            <person name="Ando T."/>
            <person name="Aoki H."/>
            <person name="Arita K."/>
            <person name="Hamada M."/>
            <person name="Harada C."/>
            <person name="Hijishita S."/>
            <person name="Honda M."/>
            <person name="Ichikawa Y."/>
            <person name="Idonuma A."/>
            <person name="Iijima M."/>
            <person name="Ikeda M."/>
            <person name="Ikeno M."/>
            <person name="Ito S."/>
            <person name="Ito T."/>
            <person name="Ito Y."/>
            <person name="Ito Y."/>
            <person name="Iwabuchi A."/>
            <person name="Kamiya K."/>
            <person name="Karasawa W."/>
            <person name="Katagiri S."/>
            <person name="Kikuta A."/>
            <person name="Kobayashi N."/>
            <person name="Kono I."/>
            <person name="Machita K."/>
            <person name="Maehara T."/>
            <person name="Mizuno H."/>
            <person name="Mizubayashi T."/>
            <person name="Mukai Y."/>
            <person name="Nagasaki H."/>
            <person name="Nakashima M."/>
            <person name="Nakama Y."/>
            <person name="Nakamichi Y."/>
            <person name="Nakamura M."/>
            <person name="Namiki N."/>
            <person name="Negishi M."/>
            <person name="Ohta I."/>
            <person name="Ono N."/>
            <person name="Saji S."/>
            <person name="Sakai K."/>
            <person name="Shibata M."/>
            <person name="Shimokawa T."/>
            <person name="Shomura A."/>
            <person name="Song J."/>
            <person name="Takazaki Y."/>
            <person name="Terasawa K."/>
            <person name="Tsuji K."/>
            <person name="Waki K."/>
            <person name="Yamagata H."/>
            <person name="Yamane H."/>
            <person name="Yoshiki S."/>
            <person name="Yoshihara R."/>
            <person name="Yukawa K."/>
            <person name="Zhong H."/>
            <person name="Iwama H."/>
            <person name="Endo T."/>
            <person name="Ito H."/>
            <person name="Hahn J.H."/>
            <person name="Kim H.-I."/>
            <person name="Eun M.-Y."/>
            <person name="Yano M."/>
            <person name="Jiang J."/>
            <person name="Gojobori T."/>
        </authorList>
    </citation>
    <scope>NUCLEOTIDE SEQUENCE [LARGE SCALE GENOMIC DNA]</scope>
    <source>
        <strain>cv. Nipponbare</strain>
    </source>
</reference>
<reference key="2">
    <citation type="journal article" date="2005" name="Nature">
        <title>The map-based sequence of the rice genome.</title>
        <authorList>
            <consortium name="International rice genome sequencing project (IRGSP)"/>
        </authorList>
    </citation>
    <scope>NUCLEOTIDE SEQUENCE [LARGE SCALE GENOMIC DNA]</scope>
    <source>
        <strain>cv. Nipponbare</strain>
    </source>
</reference>
<reference key="3">
    <citation type="journal article" date="2008" name="Nucleic Acids Res.">
        <title>The rice annotation project database (RAP-DB): 2008 update.</title>
        <authorList>
            <consortium name="The rice annotation project (RAP)"/>
        </authorList>
    </citation>
    <scope>GENOME REANNOTATION</scope>
    <source>
        <strain>cv. Nipponbare</strain>
    </source>
</reference>
<reference key="4">
    <citation type="journal article" date="2013" name="Rice">
        <title>Improvement of the Oryza sativa Nipponbare reference genome using next generation sequence and optical map data.</title>
        <authorList>
            <person name="Kawahara Y."/>
            <person name="de la Bastide M."/>
            <person name="Hamilton J.P."/>
            <person name="Kanamori H."/>
            <person name="McCombie W.R."/>
            <person name="Ouyang S."/>
            <person name="Schwartz D.C."/>
            <person name="Tanaka T."/>
            <person name="Wu J."/>
            <person name="Zhou S."/>
            <person name="Childs K.L."/>
            <person name="Davidson R.M."/>
            <person name="Lin H."/>
            <person name="Quesada-Ocampo L."/>
            <person name="Vaillancourt B."/>
            <person name="Sakai H."/>
            <person name="Lee S.S."/>
            <person name="Kim J."/>
            <person name="Numa H."/>
            <person name="Itoh T."/>
            <person name="Buell C.R."/>
            <person name="Matsumoto T."/>
        </authorList>
    </citation>
    <scope>GENOME REANNOTATION</scope>
    <source>
        <strain>cv. Nipponbare</strain>
    </source>
</reference>
<reference key="5">
    <citation type="journal article" date="2003" name="Science">
        <title>Collection, mapping, and annotation of over 28,000 cDNA clones from japonica rice.</title>
        <authorList>
            <consortium name="The rice full-length cDNA consortium"/>
        </authorList>
    </citation>
    <scope>NUCLEOTIDE SEQUENCE [LARGE SCALE MRNA]</scope>
    <source>
        <strain>cv. Nipponbare</strain>
    </source>
</reference>
<comment type="function">
    <text evidence="1">Catalyzes the phosphorylation of thiamine to thiamine pyrophosphate (TPP). TPP is an active cofactor for enzymes involved in glycolysis and energy production. Plant leaves require high levels of TPP for photosynthesis and carbohydrate metabolism (By similarity).</text>
</comment>
<comment type="catalytic activity">
    <reaction>
        <text>thiamine + ATP = thiamine diphosphate + AMP + H(+)</text>
        <dbReference type="Rhea" id="RHEA:11576"/>
        <dbReference type="ChEBI" id="CHEBI:15378"/>
        <dbReference type="ChEBI" id="CHEBI:18385"/>
        <dbReference type="ChEBI" id="CHEBI:30616"/>
        <dbReference type="ChEBI" id="CHEBI:58937"/>
        <dbReference type="ChEBI" id="CHEBI:456215"/>
        <dbReference type="EC" id="2.7.6.2"/>
    </reaction>
</comment>
<comment type="pathway">
    <text>Cofactor biosynthesis; thiamine diphosphate biosynthesis; thiamine diphosphate from thiamine: step 1/1.</text>
</comment>
<comment type="subcellular location">
    <subcellularLocation>
        <location evidence="1">Cytoplasm</location>
        <location evidence="1">Cytosol</location>
    </subcellularLocation>
</comment>
<comment type="similarity">
    <text evidence="2">Belongs to the thiamine pyrophosphokinase family.</text>
</comment>
<comment type="sequence caution" evidence="2">
    <conflict type="erroneous initiation">
        <sequence resource="EMBL-CDS" id="BAD52763"/>
    </conflict>
    <text>Truncated N-terminus.</text>
</comment>
<comment type="sequence caution" evidence="2">
    <conflict type="erroneous initiation">
        <sequence resource="EMBL-CDS" id="BAD53067"/>
    </conflict>
    <text>Truncated N-terminus.</text>
</comment>
<keyword id="KW-0067">ATP-binding</keyword>
<keyword id="KW-0963">Cytoplasm</keyword>
<keyword id="KW-0418">Kinase</keyword>
<keyword id="KW-0547">Nucleotide-binding</keyword>
<keyword id="KW-1185">Reference proteome</keyword>
<keyword id="KW-0808">Transferase</keyword>
<dbReference type="EC" id="2.7.6.2"/>
<dbReference type="EMBL" id="AP003207">
    <property type="protein sequence ID" value="BAD52763.1"/>
    <property type="status" value="ALT_INIT"/>
    <property type="molecule type" value="Genomic_DNA"/>
</dbReference>
<dbReference type="EMBL" id="AP003312">
    <property type="protein sequence ID" value="BAD53067.1"/>
    <property type="status" value="ALT_INIT"/>
    <property type="molecule type" value="Genomic_DNA"/>
</dbReference>
<dbReference type="EMBL" id="AP008207">
    <property type="protein sequence ID" value="BAF04918.1"/>
    <property type="molecule type" value="Genomic_DNA"/>
</dbReference>
<dbReference type="EMBL" id="AP014957">
    <property type="protein sequence ID" value="BAS72068.1"/>
    <property type="molecule type" value="Genomic_DNA"/>
</dbReference>
<dbReference type="EMBL" id="AK070843">
    <property type="protein sequence ID" value="BAG92167.1"/>
    <property type="molecule type" value="mRNA"/>
</dbReference>
<dbReference type="RefSeq" id="XP_015621862.1">
    <property type="nucleotide sequence ID" value="XM_015766376.1"/>
</dbReference>
<dbReference type="SMR" id="Q0JMW0"/>
<dbReference type="FunCoup" id="Q0JMW0">
    <property type="interactions" value="864"/>
</dbReference>
<dbReference type="STRING" id="39947.Q0JMW0"/>
<dbReference type="PaxDb" id="39947-Q0JMW0"/>
<dbReference type="EnsemblPlants" id="Os01t0356500-01">
    <property type="protein sequence ID" value="Os01t0356500-01"/>
    <property type="gene ID" value="Os01g0356500"/>
</dbReference>
<dbReference type="Gramene" id="Os01t0356500-01">
    <property type="protein sequence ID" value="Os01t0356500-01"/>
    <property type="gene ID" value="Os01g0356500"/>
</dbReference>
<dbReference type="KEGG" id="dosa:Os01g0356500"/>
<dbReference type="eggNOG" id="KOG3153">
    <property type="taxonomic scope" value="Eukaryota"/>
</dbReference>
<dbReference type="HOGENOM" id="CLU_044237_0_2_1"/>
<dbReference type="InParanoid" id="Q0JMW0"/>
<dbReference type="OMA" id="TDMCKAL"/>
<dbReference type="OrthoDB" id="25149at2759"/>
<dbReference type="UniPathway" id="UPA00060">
    <property type="reaction ID" value="UER00597"/>
</dbReference>
<dbReference type="Proteomes" id="UP000000763">
    <property type="component" value="Chromosome 1"/>
</dbReference>
<dbReference type="Proteomes" id="UP000059680">
    <property type="component" value="Chromosome 1"/>
</dbReference>
<dbReference type="GO" id="GO:0005829">
    <property type="term" value="C:cytosol"/>
    <property type="evidence" value="ECO:0007669"/>
    <property type="project" value="UniProtKB-SubCell"/>
</dbReference>
<dbReference type="GO" id="GO:0005524">
    <property type="term" value="F:ATP binding"/>
    <property type="evidence" value="ECO:0007669"/>
    <property type="project" value="UniProtKB-KW"/>
</dbReference>
<dbReference type="GO" id="GO:0016301">
    <property type="term" value="F:kinase activity"/>
    <property type="evidence" value="ECO:0007669"/>
    <property type="project" value="UniProtKB-KW"/>
</dbReference>
<dbReference type="GO" id="GO:0030975">
    <property type="term" value="F:thiamine binding"/>
    <property type="evidence" value="ECO:0007669"/>
    <property type="project" value="InterPro"/>
</dbReference>
<dbReference type="GO" id="GO:0004788">
    <property type="term" value="F:thiamine diphosphokinase activity"/>
    <property type="evidence" value="ECO:0000318"/>
    <property type="project" value="GO_Central"/>
</dbReference>
<dbReference type="GO" id="GO:0009229">
    <property type="term" value="P:thiamine diphosphate biosynthetic process"/>
    <property type="evidence" value="ECO:0000318"/>
    <property type="project" value="GO_Central"/>
</dbReference>
<dbReference type="GO" id="GO:0006772">
    <property type="term" value="P:thiamine metabolic process"/>
    <property type="evidence" value="ECO:0007669"/>
    <property type="project" value="InterPro"/>
</dbReference>
<dbReference type="CDD" id="cd07995">
    <property type="entry name" value="TPK"/>
    <property type="match status" value="1"/>
</dbReference>
<dbReference type="FunFam" id="2.60.120.320:FF:000001">
    <property type="entry name" value="Thiamine pyrophosphokinase"/>
    <property type="match status" value="1"/>
</dbReference>
<dbReference type="FunFam" id="3.40.50.10240:FF:000001">
    <property type="entry name" value="Thiamine pyrophosphokinase"/>
    <property type="match status" value="1"/>
</dbReference>
<dbReference type="Gene3D" id="3.40.50.10240">
    <property type="entry name" value="Thiamin pyrophosphokinase, catalytic domain"/>
    <property type="match status" value="1"/>
</dbReference>
<dbReference type="Gene3D" id="2.60.120.320">
    <property type="entry name" value="Thiamin pyrophosphokinase, thiamin-binding domain"/>
    <property type="match status" value="1"/>
</dbReference>
<dbReference type="InterPro" id="IPR006282">
    <property type="entry name" value="Thi_PPkinase"/>
</dbReference>
<dbReference type="InterPro" id="IPR016966">
    <property type="entry name" value="Thiamin_pyrophosphokinase_euk"/>
</dbReference>
<dbReference type="InterPro" id="IPR007373">
    <property type="entry name" value="Thiamin_PyroPKinase_B1-bd"/>
</dbReference>
<dbReference type="InterPro" id="IPR036371">
    <property type="entry name" value="TPK_B1-bd_sf"/>
</dbReference>
<dbReference type="InterPro" id="IPR007371">
    <property type="entry name" value="TPK_catalytic"/>
</dbReference>
<dbReference type="InterPro" id="IPR036759">
    <property type="entry name" value="TPK_catalytic_sf"/>
</dbReference>
<dbReference type="NCBIfam" id="TIGR01378">
    <property type="entry name" value="thi_PPkinase"/>
    <property type="match status" value="1"/>
</dbReference>
<dbReference type="PANTHER" id="PTHR13622">
    <property type="entry name" value="THIAMIN PYROPHOSPHOKINASE"/>
    <property type="match status" value="1"/>
</dbReference>
<dbReference type="PANTHER" id="PTHR13622:SF6">
    <property type="entry name" value="THIAMINE PYROPHOSPHOKINASE 2"/>
    <property type="match status" value="1"/>
</dbReference>
<dbReference type="Pfam" id="PF04265">
    <property type="entry name" value="TPK_B1_binding"/>
    <property type="match status" value="1"/>
</dbReference>
<dbReference type="Pfam" id="PF04263">
    <property type="entry name" value="TPK_catalytic"/>
    <property type="match status" value="1"/>
</dbReference>
<dbReference type="PIRSF" id="PIRSF031057">
    <property type="entry name" value="Thiamin_pyrophosphokinase"/>
    <property type="match status" value="1"/>
</dbReference>
<dbReference type="SMART" id="SM00983">
    <property type="entry name" value="TPK_B1_binding"/>
    <property type="match status" value="1"/>
</dbReference>
<dbReference type="SUPFAM" id="SSF63999">
    <property type="entry name" value="Thiamin pyrophosphokinase, catalytic domain"/>
    <property type="match status" value="1"/>
</dbReference>
<dbReference type="SUPFAM" id="SSF63862">
    <property type="entry name" value="Thiamin pyrophosphokinase, substrate-binding domain"/>
    <property type="match status" value="1"/>
</dbReference>
<feature type="chain" id="PRO_0000423969" description="Thiamine pyrophosphokinase 2">
    <location>
        <begin position="1"/>
        <end position="267"/>
    </location>
</feature>
<name>TPK2_ORYSJ</name>
<organism>
    <name type="scientific">Oryza sativa subsp. japonica</name>
    <name type="common">Rice</name>
    <dbReference type="NCBI Taxonomy" id="39947"/>
    <lineage>
        <taxon>Eukaryota</taxon>
        <taxon>Viridiplantae</taxon>
        <taxon>Streptophyta</taxon>
        <taxon>Embryophyta</taxon>
        <taxon>Tracheophyta</taxon>
        <taxon>Spermatophyta</taxon>
        <taxon>Magnoliopsida</taxon>
        <taxon>Liliopsida</taxon>
        <taxon>Poales</taxon>
        <taxon>Poaceae</taxon>
        <taxon>BOP clade</taxon>
        <taxon>Oryzoideae</taxon>
        <taxon>Oryzeae</taxon>
        <taxon>Oryzinae</taxon>
        <taxon>Oryza</taxon>
        <taxon>Oryza sativa</taxon>
    </lineage>
</organism>